<evidence type="ECO:0000255" key="1">
    <source>
        <dbReference type="HAMAP-Rule" id="MF_01024"/>
    </source>
</evidence>
<protein>
    <recommendedName>
        <fullName evidence="1">Histidinol dehydrogenase</fullName>
        <shortName evidence="1">HDH</shortName>
        <ecNumber evidence="1">1.1.1.23</ecNumber>
    </recommendedName>
</protein>
<dbReference type="EC" id="1.1.1.23" evidence="1"/>
<dbReference type="EMBL" id="CP000112">
    <property type="protein sequence ID" value="ABB37809.1"/>
    <property type="molecule type" value="Genomic_DNA"/>
</dbReference>
<dbReference type="RefSeq" id="WP_011367049.1">
    <property type="nucleotide sequence ID" value="NC_007519.1"/>
</dbReference>
<dbReference type="SMR" id="Q313T7"/>
<dbReference type="STRING" id="207559.Dde_1008"/>
<dbReference type="KEGG" id="dde:Dde_1008"/>
<dbReference type="eggNOG" id="COG0141">
    <property type="taxonomic scope" value="Bacteria"/>
</dbReference>
<dbReference type="HOGENOM" id="CLU_006732_3_3_7"/>
<dbReference type="UniPathway" id="UPA00031">
    <property type="reaction ID" value="UER00014"/>
</dbReference>
<dbReference type="Proteomes" id="UP000002710">
    <property type="component" value="Chromosome"/>
</dbReference>
<dbReference type="GO" id="GO:0005829">
    <property type="term" value="C:cytosol"/>
    <property type="evidence" value="ECO:0007669"/>
    <property type="project" value="TreeGrafter"/>
</dbReference>
<dbReference type="GO" id="GO:0004399">
    <property type="term" value="F:histidinol dehydrogenase activity"/>
    <property type="evidence" value="ECO:0007669"/>
    <property type="project" value="UniProtKB-UniRule"/>
</dbReference>
<dbReference type="GO" id="GO:0051287">
    <property type="term" value="F:NAD binding"/>
    <property type="evidence" value="ECO:0007669"/>
    <property type="project" value="InterPro"/>
</dbReference>
<dbReference type="GO" id="GO:0008270">
    <property type="term" value="F:zinc ion binding"/>
    <property type="evidence" value="ECO:0007669"/>
    <property type="project" value="UniProtKB-UniRule"/>
</dbReference>
<dbReference type="GO" id="GO:0000105">
    <property type="term" value="P:L-histidine biosynthetic process"/>
    <property type="evidence" value="ECO:0007669"/>
    <property type="project" value="UniProtKB-UniRule"/>
</dbReference>
<dbReference type="CDD" id="cd06572">
    <property type="entry name" value="Histidinol_dh"/>
    <property type="match status" value="1"/>
</dbReference>
<dbReference type="FunFam" id="3.40.50.1980:FF:000001">
    <property type="entry name" value="Histidinol dehydrogenase"/>
    <property type="match status" value="1"/>
</dbReference>
<dbReference type="FunFam" id="3.40.50.1980:FF:000026">
    <property type="entry name" value="Histidinol dehydrogenase"/>
    <property type="match status" value="1"/>
</dbReference>
<dbReference type="Gene3D" id="1.20.5.1300">
    <property type="match status" value="1"/>
</dbReference>
<dbReference type="Gene3D" id="3.40.50.1980">
    <property type="entry name" value="Nitrogenase molybdenum iron protein domain"/>
    <property type="match status" value="2"/>
</dbReference>
<dbReference type="HAMAP" id="MF_01024">
    <property type="entry name" value="HisD"/>
    <property type="match status" value="1"/>
</dbReference>
<dbReference type="InterPro" id="IPR016161">
    <property type="entry name" value="Ald_DH/histidinol_DH"/>
</dbReference>
<dbReference type="InterPro" id="IPR001692">
    <property type="entry name" value="Histidinol_DH_CS"/>
</dbReference>
<dbReference type="InterPro" id="IPR022695">
    <property type="entry name" value="Histidinol_DH_monofunct"/>
</dbReference>
<dbReference type="InterPro" id="IPR012131">
    <property type="entry name" value="Hstdl_DH"/>
</dbReference>
<dbReference type="NCBIfam" id="TIGR00069">
    <property type="entry name" value="hisD"/>
    <property type="match status" value="1"/>
</dbReference>
<dbReference type="PANTHER" id="PTHR21256:SF2">
    <property type="entry name" value="HISTIDINE BIOSYNTHESIS TRIFUNCTIONAL PROTEIN"/>
    <property type="match status" value="1"/>
</dbReference>
<dbReference type="PANTHER" id="PTHR21256">
    <property type="entry name" value="HISTIDINOL DEHYDROGENASE HDH"/>
    <property type="match status" value="1"/>
</dbReference>
<dbReference type="Pfam" id="PF00815">
    <property type="entry name" value="Histidinol_dh"/>
    <property type="match status" value="1"/>
</dbReference>
<dbReference type="PIRSF" id="PIRSF000099">
    <property type="entry name" value="Histidinol_dh"/>
    <property type="match status" value="1"/>
</dbReference>
<dbReference type="PRINTS" id="PR00083">
    <property type="entry name" value="HOLDHDRGNASE"/>
</dbReference>
<dbReference type="SUPFAM" id="SSF53720">
    <property type="entry name" value="ALDH-like"/>
    <property type="match status" value="1"/>
</dbReference>
<dbReference type="PROSITE" id="PS00611">
    <property type="entry name" value="HISOL_DEHYDROGENASE"/>
    <property type="match status" value="1"/>
</dbReference>
<gene>
    <name evidence="1" type="primary">hisD</name>
    <name type="ordered locus">Dde_1008</name>
</gene>
<proteinExistence type="inferred from homology"/>
<comment type="function">
    <text evidence="1">Catalyzes the sequential NAD-dependent oxidations of L-histidinol to L-histidinaldehyde and then to L-histidine.</text>
</comment>
<comment type="catalytic activity">
    <reaction evidence="1">
        <text>L-histidinol + 2 NAD(+) + H2O = L-histidine + 2 NADH + 3 H(+)</text>
        <dbReference type="Rhea" id="RHEA:20641"/>
        <dbReference type="ChEBI" id="CHEBI:15377"/>
        <dbReference type="ChEBI" id="CHEBI:15378"/>
        <dbReference type="ChEBI" id="CHEBI:57540"/>
        <dbReference type="ChEBI" id="CHEBI:57595"/>
        <dbReference type="ChEBI" id="CHEBI:57699"/>
        <dbReference type="ChEBI" id="CHEBI:57945"/>
        <dbReference type="EC" id="1.1.1.23"/>
    </reaction>
</comment>
<comment type="cofactor">
    <cofactor evidence="1">
        <name>Zn(2+)</name>
        <dbReference type="ChEBI" id="CHEBI:29105"/>
    </cofactor>
    <text evidence="1">Binds 1 zinc ion per subunit.</text>
</comment>
<comment type="pathway">
    <text evidence="1">Amino-acid biosynthesis; L-histidine biosynthesis; L-histidine from 5-phospho-alpha-D-ribose 1-diphosphate: step 9/9.</text>
</comment>
<comment type="similarity">
    <text evidence="1">Belongs to the histidinol dehydrogenase family.</text>
</comment>
<feature type="chain" id="PRO_0000229856" description="Histidinol dehydrogenase">
    <location>
        <begin position="1"/>
        <end position="434"/>
    </location>
</feature>
<feature type="active site" description="Proton acceptor" evidence="1">
    <location>
        <position position="332"/>
    </location>
</feature>
<feature type="active site" description="Proton acceptor" evidence="1">
    <location>
        <position position="333"/>
    </location>
</feature>
<feature type="binding site" evidence="1">
    <location>
        <position position="242"/>
    </location>
    <ligand>
        <name>substrate</name>
    </ligand>
</feature>
<feature type="binding site" evidence="1">
    <location>
        <position position="264"/>
    </location>
    <ligand>
        <name>substrate</name>
    </ligand>
</feature>
<feature type="binding site" evidence="1">
    <location>
        <position position="264"/>
    </location>
    <ligand>
        <name>Zn(2+)</name>
        <dbReference type="ChEBI" id="CHEBI:29105"/>
    </ligand>
</feature>
<feature type="binding site" evidence="1">
    <location>
        <position position="267"/>
    </location>
    <ligand>
        <name>substrate</name>
    </ligand>
</feature>
<feature type="binding site" evidence="1">
    <location>
        <position position="267"/>
    </location>
    <ligand>
        <name>Zn(2+)</name>
        <dbReference type="ChEBI" id="CHEBI:29105"/>
    </ligand>
</feature>
<feature type="binding site" evidence="1">
    <location>
        <position position="333"/>
    </location>
    <ligand>
        <name>substrate</name>
    </ligand>
</feature>
<feature type="binding site" evidence="1">
    <location>
        <position position="366"/>
    </location>
    <ligand>
        <name>substrate</name>
    </ligand>
</feature>
<feature type="binding site" evidence="1">
    <location>
        <position position="366"/>
    </location>
    <ligand>
        <name>Zn(2+)</name>
        <dbReference type="ChEBI" id="CHEBI:29105"/>
    </ligand>
</feature>
<feature type="binding site" evidence="1">
    <location>
        <position position="420"/>
    </location>
    <ligand>
        <name>substrate</name>
    </ligand>
</feature>
<feature type="binding site" evidence="1">
    <location>
        <position position="425"/>
    </location>
    <ligand>
        <name>substrate</name>
    </ligand>
</feature>
<feature type="binding site" evidence="1">
    <location>
        <position position="425"/>
    </location>
    <ligand>
        <name>Zn(2+)</name>
        <dbReference type="ChEBI" id="CHEBI:29105"/>
    </ligand>
</feature>
<sequence>MPCRTLTYSSEADWQGIRDMLCGRENPENSVEPVVREIMDAIRSDGDAALAGYTRRFDCPDFDPSSLRVAPDAIEKAAREIPRHDLQIITEAADNIRHFHSAQKEEAWFITRPDGTVLGQMTRPVDSAGLYVPGGQGGNTPLISSLLMNAVPAQVAGVPRIAVTTPPRKDGTLNPYILAAAHVLGLDEIYCAGSAWAVAALAYGTQTIAPVDFIAGPGNIFVTTAKRMLIGTVGIDMIAGPSEILIIADSQADAAHVAADMLSQAEHDPLASAILVTPSPQLAAAVHTELEKQVTGLDRADIARASLRDWSAIVVTPDLNSAVELSNKVAPEHLELLVQDTWGLLGSIRNAGAIFMGPHSPEPVGDYFAGPNHVLPTMGTARFSSALSVQSFCKKSSIIAASQTFTQTNAAKIARLARLEGLEAHARSVESRLS</sequence>
<accession>Q313T7</accession>
<organism>
    <name type="scientific">Oleidesulfovibrio alaskensis (strain ATCC BAA-1058 / DSM 17464 / G20)</name>
    <name type="common">Desulfovibrio alaskensis</name>
    <dbReference type="NCBI Taxonomy" id="207559"/>
    <lineage>
        <taxon>Bacteria</taxon>
        <taxon>Pseudomonadati</taxon>
        <taxon>Thermodesulfobacteriota</taxon>
        <taxon>Desulfovibrionia</taxon>
        <taxon>Desulfovibrionales</taxon>
        <taxon>Desulfovibrionaceae</taxon>
        <taxon>Oleidesulfovibrio</taxon>
    </lineage>
</organism>
<keyword id="KW-0028">Amino-acid biosynthesis</keyword>
<keyword id="KW-0368">Histidine biosynthesis</keyword>
<keyword id="KW-0479">Metal-binding</keyword>
<keyword id="KW-0520">NAD</keyword>
<keyword id="KW-0560">Oxidoreductase</keyword>
<keyword id="KW-1185">Reference proteome</keyword>
<keyword id="KW-0862">Zinc</keyword>
<reference key="1">
    <citation type="journal article" date="2011" name="J. Bacteriol.">
        <title>Complete genome sequence and updated annotation of Desulfovibrio alaskensis G20.</title>
        <authorList>
            <person name="Hauser L.J."/>
            <person name="Land M.L."/>
            <person name="Brown S.D."/>
            <person name="Larimer F."/>
            <person name="Keller K.L."/>
            <person name="Rapp-Giles B.J."/>
            <person name="Price M.N."/>
            <person name="Lin M."/>
            <person name="Bruce D.C."/>
            <person name="Detter J.C."/>
            <person name="Tapia R."/>
            <person name="Han C.S."/>
            <person name="Goodwin L.A."/>
            <person name="Cheng J.F."/>
            <person name="Pitluck S."/>
            <person name="Copeland A."/>
            <person name="Lucas S."/>
            <person name="Nolan M."/>
            <person name="Lapidus A.L."/>
            <person name="Palumbo A.V."/>
            <person name="Wall J.D."/>
        </authorList>
    </citation>
    <scope>NUCLEOTIDE SEQUENCE [LARGE SCALE GENOMIC DNA]</scope>
    <source>
        <strain>ATCC BAA-1058 / DSM 17464 / G20</strain>
    </source>
</reference>
<name>HISX_OLEA2</name>